<evidence type="ECO:0000255" key="1">
    <source>
        <dbReference type="HAMAP-Rule" id="MF_00532"/>
    </source>
</evidence>
<evidence type="ECO:0000305" key="2"/>
<comment type="similarity">
    <text evidence="1">Belongs to the universal ribosomal protein uS9 family.</text>
</comment>
<gene>
    <name evidence="1" type="primary">rpsI</name>
    <name type="ordered locus">VV0595</name>
</gene>
<dbReference type="EMBL" id="BA000037">
    <property type="protein sequence ID" value="BAC93359.1"/>
    <property type="molecule type" value="Genomic_DNA"/>
</dbReference>
<dbReference type="RefSeq" id="WP_011078683.1">
    <property type="nucleotide sequence ID" value="NC_005139.1"/>
</dbReference>
<dbReference type="SMR" id="Q7MNX0"/>
<dbReference type="STRING" id="672.VV93_v1c05360"/>
<dbReference type="GeneID" id="93894910"/>
<dbReference type="KEGG" id="vvy:VV0595"/>
<dbReference type="eggNOG" id="COG0103">
    <property type="taxonomic scope" value="Bacteria"/>
</dbReference>
<dbReference type="HOGENOM" id="CLU_046483_2_1_6"/>
<dbReference type="Proteomes" id="UP000002675">
    <property type="component" value="Chromosome I"/>
</dbReference>
<dbReference type="GO" id="GO:0022627">
    <property type="term" value="C:cytosolic small ribosomal subunit"/>
    <property type="evidence" value="ECO:0007669"/>
    <property type="project" value="TreeGrafter"/>
</dbReference>
<dbReference type="GO" id="GO:0003723">
    <property type="term" value="F:RNA binding"/>
    <property type="evidence" value="ECO:0007669"/>
    <property type="project" value="TreeGrafter"/>
</dbReference>
<dbReference type="GO" id="GO:0003735">
    <property type="term" value="F:structural constituent of ribosome"/>
    <property type="evidence" value="ECO:0007669"/>
    <property type="project" value="InterPro"/>
</dbReference>
<dbReference type="GO" id="GO:0006412">
    <property type="term" value="P:translation"/>
    <property type="evidence" value="ECO:0007669"/>
    <property type="project" value="UniProtKB-UniRule"/>
</dbReference>
<dbReference type="FunFam" id="3.30.230.10:FF:000001">
    <property type="entry name" value="30S ribosomal protein S9"/>
    <property type="match status" value="1"/>
</dbReference>
<dbReference type="Gene3D" id="3.30.230.10">
    <property type="match status" value="1"/>
</dbReference>
<dbReference type="HAMAP" id="MF_00532_B">
    <property type="entry name" value="Ribosomal_uS9_B"/>
    <property type="match status" value="1"/>
</dbReference>
<dbReference type="InterPro" id="IPR020568">
    <property type="entry name" value="Ribosomal_Su5_D2-typ_SF"/>
</dbReference>
<dbReference type="InterPro" id="IPR000754">
    <property type="entry name" value="Ribosomal_uS9"/>
</dbReference>
<dbReference type="InterPro" id="IPR023035">
    <property type="entry name" value="Ribosomal_uS9_bac/plastid"/>
</dbReference>
<dbReference type="InterPro" id="IPR020574">
    <property type="entry name" value="Ribosomal_uS9_CS"/>
</dbReference>
<dbReference type="InterPro" id="IPR014721">
    <property type="entry name" value="Ribsml_uS5_D2-typ_fold_subgr"/>
</dbReference>
<dbReference type="NCBIfam" id="NF001099">
    <property type="entry name" value="PRK00132.1"/>
    <property type="match status" value="1"/>
</dbReference>
<dbReference type="PANTHER" id="PTHR21569">
    <property type="entry name" value="RIBOSOMAL PROTEIN S9"/>
    <property type="match status" value="1"/>
</dbReference>
<dbReference type="PANTHER" id="PTHR21569:SF1">
    <property type="entry name" value="SMALL RIBOSOMAL SUBUNIT PROTEIN US9M"/>
    <property type="match status" value="1"/>
</dbReference>
<dbReference type="Pfam" id="PF00380">
    <property type="entry name" value="Ribosomal_S9"/>
    <property type="match status" value="1"/>
</dbReference>
<dbReference type="SUPFAM" id="SSF54211">
    <property type="entry name" value="Ribosomal protein S5 domain 2-like"/>
    <property type="match status" value="1"/>
</dbReference>
<dbReference type="PROSITE" id="PS00360">
    <property type="entry name" value="RIBOSOMAL_S9"/>
    <property type="match status" value="1"/>
</dbReference>
<name>RS9_VIBVY</name>
<sequence length="130" mass="14589">MAENQYYGTGRRKSSAARVFIKPGSGNIVINKRALEEYFGRPTSCMVVKQPLELVDMVEKLDLYITVKGGGISGQAGAIRHGITRALMEYDESLRPALRAAGYVTRDARCVERKKVGLRKARRRPQFSKR</sequence>
<accession>Q7MNX0</accession>
<feature type="chain" id="PRO_0000111440" description="Small ribosomal subunit protein uS9">
    <location>
        <begin position="1"/>
        <end position="130"/>
    </location>
</feature>
<proteinExistence type="inferred from homology"/>
<organism>
    <name type="scientific">Vibrio vulnificus (strain YJ016)</name>
    <dbReference type="NCBI Taxonomy" id="196600"/>
    <lineage>
        <taxon>Bacteria</taxon>
        <taxon>Pseudomonadati</taxon>
        <taxon>Pseudomonadota</taxon>
        <taxon>Gammaproteobacteria</taxon>
        <taxon>Vibrionales</taxon>
        <taxon>Vibrionaceae</taxon>
        <taxon>Vibrio</taxon>
    </lineage>
</organism>
<reference key="1">
    <citation type="journal article" date="2003" name="Genome Res.">
        <title>Comparative genome analysis of Vibrio vulnificus, a marine pathogen.</title>
        <authorList>
            <person name="Chen C.-Y."/>
            <person name="Wu K.-M."/>
            <person name="Chang Y.-C."/>
            <person name="Chang C.-H."/>
            <person name="Tsai H.-C."/>
            <person name="Liao T.-L."/>
            <person name="Liu Y.-M."/>
            <person name="Chen H.-J."/>
            <person name="Shen A.B.-T."/>
            <person name="Li J.-C."/>
            <person name="Su T.-L."/>
            <person name="Shao C.-P."/>
            <person name="Lee C.-T."/>
            <person name="Hor L.-I."/>
            <person name="Tsai S.-F."/>
        </authorList>
    </citation>
    <scope>NUCLEOTIDE SEQUENCE [LARGE SCALE GENOMIC DNA]</scope>
    <source>
        <strain>YJ016</strain>
    </source>
</reference>
<keyword id="KW-0687">Ribonucleoprotein</keyword>
<keyword id="KW-0689">Ribosomal protein</keyword>
<protein>
    <recommendedName>
        <fullName evidence="1">Small ribosomal subunit protein uS9</fullName>
    </recommendedName>
    <alternativeName>
        <fullName evidence="2">30S ribosomal protein S9</fullName>
    </alternativeName>
</protein>